<name>TEKT1_RAT</name>
<proteinExistence type="evidence at transcript level"/>
<reference key="1">
    <citation type="submission" date="2001-03" db="EMBL/GenBank/DDBJ databases">
        <title>Sequence and developmental expression of tektin transcripts in rat testis.</title>
        <authorList>
            <person name="Hurd E."/>
            <person name="Frayne J."/>
            <person name="Hall L."/>
        </authorList>
    </citation>
    <scope>NUCLEOTIDE SEQUENCE [MRNA]</scope>
    <source>
        <strain>Sprague-Dawley</strain>
        <tissue>Testis</tissue>
    </source>
</reference>
<reference key="2">
    <citation type="journal article" date="2004" name="Genome Res.">
        <title>The status, quality, and expansion of the NIH full-length cDNA project: the Mammalian Gene Collection (MGC).</title>
        <authorList>
            <consortium name="The MGC Project Team"/>
        </authorList>
    </citation>
    <scope>NUCLEOTIDE SEQUENCE [LARGE SCALE MRNA]</scope>
    <source>
        <strain>Brown Norway</strain>
        <tissue>Testis</tissue>
    </source>
</reference>
<dbReference type="EMBL" id="AJ306427">
    <property type="protein sequence ID" value="CAC34480.1"/>
    <property type="molecule type" value="mRNA"/>
</dbReference>
<dbReference type="EMBL" id="BC078773">
    <property type="protein sequence ID" value="AAH78773.1"/>
    <property type="molecule type" value="mRNA"/>
</dbReference>
<dbReference type="RefSeq" id="NP_445960.1">
    <property type="nucleotide sequence ID" value="NM_053508.2"/>
</dbReference>
<dbReference type="SMR" id="Q99JD2"/>
<dbReference type="FunCoup" id="Q99JD2">
    <property type="interactions" value="124"/>
</dbReference>
<dbReference type="STRING" id="10116.ENSRNOP00000062126"/>
<dbReference type="iPTMnet" id="Q99JD2"/>
<dbReference type="PhosphoSitePlus" id="Q99JD2"/>
<dbReference type="PaxDb" id="10116-ENSRNOP00000062126"/>
<dbReference type="Ensembl" id="ENSRNOT00000066740.3">
    <property type="protein sequence ID" value="ENSRNOP00000062126.1"/>
    <property type="gene ID" value="ENSRNOG00000014973.8"/>
</dbReference>
<dbReference type="GeneID" id="85270"/>
<dbReference type="KEGG" id="rno:85270"/>
<dbReference type="AGR" id="RGD:619913"/>
<dbReference type="CTD" id="83659"/>
<dbReference type="RGD" id="619913">
    <property type="gene designation" value="Tekt1"/>
</dbReference>
<dbReference type="eggNOG" id="KOG2685">
    <property type="taxonomic scope" value="Eukaryota"/>
</dbReference>
<dbReference type="GeneTree" id="ENSGT00950000182894"/>
<dbReference type="HOGENOM" id="CLU_033588_2_2_1"/>
<dbReference type="InParanoid" id="Q99JD2"/>
<dbReference type="OMA" id="LAMVMDE"/>
<dbReference type="OrthoDB" id="10054259at2759"/>
<dbReference type="PRO" id="PR:Q99JD2"/>
<dbReference type="Proteomes" id="UP000002494">
    <property type="component" value="Chromosome 10"/>
</dbReference>
<dbReference type="Bgee" id="ENSRNOG00000014973">
    <property type="expression patterns" value="Expressed in testis and 14 other cell types or tissues"/>
</dbReference>
<dbReference type="GO" id="GO:0160111">
    <property type="term" value="C:axonemal A tubule inner sheath"/>
    <property type="evidence" value="ECO:0000250"/>
    <property type="project" value="UniProtKB"/>
</dbReference>
<dbReference type="GO" id="GO:0005879">
    <property type="term" value="C:axonemal microtubule"/>
    <property type="evidence" value="ECO:0000250"/>
    <property type="project" value="UniProtKB"/>
</dbReference>
<dbReference type="GO" id="GO:0015630">
    <property type="term" value="C:microtubule cytoskeleton"/>
    <property type="evidence" value="ECO:0000266"/>
    <property type="project" value="RGD"/>
</dbReference>
<dbReference type="GO" id="GO:0036126">
    <property type="term" value="C:sperm flagellum"/>
    <property type="evidence" value="ECO:0000250"/>
    <property type="project" value="UniProtKB"/>
</dbReference>
<dbReference type="GO" id="GO:0060271">
    <property type="term" value="P:cilium assembly"/>
    <property type="evidence" value="ECO:0000318"/>
    <property type="project" value="GO_Central"/>
</dbReference>
<dbReference type="GO" id="GO:0060294">
    <property type="term" value="P:cilium movement involved in cell motility"/>
    <property type="evidence" value="ECO:0000318"/>
    <property type="project" value="GO_Central"/>
</dbReference>
<dbReference type="GO" id="GO:0030317">
    <property type="term" value="P:flagellated sperm motility"/>
    <property type="evidence" value="ECO:0000250"/>
    <property type="project" value="UniProtKB"/>
</dbReference>
<dbReference type="InterPro" id="IPR048256">
    <property type="entry name" value="Tektin-like"/>
</dbReference>
<dbReference type="InterPro" id="IPR000435">
    <property type="entry name" value="Tektins"/>
</dbReference>
<dbReference type="PANTHER" id="PTHR19960">
    <property type="entry name" value="TEKTIN"/>
    <property type="match status" value="1"/>
</dbReference>
<dbReference type="PANTHER" id="PTHR19960:SF25">
    <property type="entry name" value="TEKTIN-1"/>
    <property type="match status" value="1"/>
</dbReference>
<dbReference type="Pfam" id="PF03148">
    <property type="entry name" value="Tektin"/>
    <property type="match status" value="1"/>
</dbReference>
<dbReference type="PRINTS" id="PR00511">
    <property type="entry name" value="TEKTIN"/>
</dbReference>
<protein>
    <recommendedName>
        <fullName>Tektin-1</fullName>
    </recommendedName>
</protein>
<evidence type="ECO:0000250" key="1">
    <source>
        <dbReference type="UniProtKB" id="Q32KZ9"/>
    </source>
</evidence>
<evidence type="ECO:0000250" key="2">
    <source>
        <dbReference type="UniProtKB" id="Q9DAJ2"/>
    </source>
</evidence>
<evidence type="ECO:0000255" key="3"/>
<evidence type="ECO:0000269" key="4">
    <source ref="1"/>
</evidence>
<evidence type="ECO:0000305" key="5"/>
<gene>
    <name type="primary">Tekt1</name>
</gene>
<comment type="function">
    <text evidence="2">Microtubule inner protein (MIP) part of the dynein-decorated doublet microtubules (DMTs) in cilia and flagellar axoneme. Forms filamentous polymers in the walls of ciliary and flagellar microtubules.</text>
</comment>
<comment type="subunit">
    <text evidence="2">Microtubule inner protein component of sperm flagellar doublet microtubules.</text>
</comment>
<comment type="subcellular location">
    <subcellularLocation>
        <location evidence="1">Cytoplasm</location>
        <location evidence="1">Cytoskeleton</location>
        <location evidence="1">Cilium axoneme</location>
    </subcellularLocation>
    <subcellularLocation>
        <location evidence="2">Cytoplasm</location>
        <location evidence="2">Cytoskeleton</location>
        <location evidence="2">Flagellum axoneme</location>
    </subcellularLocation>
</comment>
<comment type="tissue specificity">
    <text evidence="4">Predominantly expressed in testis.</text>
</comment>
<comment type="PTM">
    <text evidence="2">Ubiquitinated, leading to its degradation. Deubiquitinated by USP16, promoting its stability.</text>
</comment>
<comment type="similarity">
    <text evidence="5">Belongs to the tektin family.</text>
</comment>
<keyword id="KW-0966">Cell projection</keyword>
<keyword id="KW-0969">Cilium</keyword>
<keyword id="KW-0175">Coiled coil</keyword>
<keyword id="KW-0963">Cytoplasm</keyword>
<keyword id="KW-0206">Cytoskeleton</keyword>
<keyword id="KW-0282">Flagellum</keyword>
<keyword id="KW-0493">Microtubule</keyword>
<keyword id="KW-1185">Reference proteome</keyword>
<keyword id="KW-0832">Ubl conjugation</keyword>
<feature type="chain" id="PRO_0000184564" description="Tektin-1">
    <location>
        <begin position="1"/>
        <end position="418"/>
    </location>
</feature>
<feature type="coiled-coil region" evidence="3">
    <location>
        <begin position="20"/>
        <end position="107"/>
    </location>
</feature>
<feature type="coiled-coil region" evidence="3">
    <location>
        <begin position="134"/>
        <end position="177"/>
    </location>
</feature>
<feature type="coiled-coil region" evidence="3">
    <location>
        <begin position="266"/>
        <end position="308"/>
    </location>
</feature>
<feature type="coiled-coil region" evidence="3">
    <location>
        <begin position="332"/>
        <end position="383"/>
    </location>
</feature>
<organism>
    <name type="scientific">Rattus norvegicus</name>
    <name type="common">Rat</name>
    <dbReference type="NCBI Taxonomy" id="10116"/>
    <lineage>
        <taxon>Eukaryota</taxon>
        <taxon>Metazoa</taxon>
        <taxon>Chordata</taxon>
        <taxon>Craniata</taxon>
        <taxon>Vertebrata</taxon>
        <taxon>Euteleostomi</taxon>
        <taxon>Mammalia</taxon>
        <taxon>Eutheria</taxon>
        <taxon>Euarchontoglires</taxon>
        <taxon>Glires</taxon>
        <taxon>Rodentia</taxon>
        <taxon>Myomorpha</taxon>
        <taxon>Muroidea</taxon>
        <taxon>Muridae</taxon>
        <taxon>Murinae</taxon>
        <taxon>Rattus</taxon>
    </lineage>
</organism>
<accession>Q99JD2</accession>
<sequence length="418" mass="48591">MAKLLQSPPKFLPAEWYIANKSQYHRAEAQRSRSERLVAESQRLVEEIEKTTRKSQSDVNKKLEQRLEEVKFWKKELDDKLEHLVNETEDLLTYKIRLERSLESYKEPLHITEKCLAYREKRVGIDLVHDVVDQELQKEADIIHGVMNLLTRTVEEATEQIRLNRSAKYNLEKDLKDKFTAITIDDICFSLNNNSPDIKYSENVVRIEPNSVSLEDWLDFSNTNMQKADKQLNNSMALKTLVDQILSQTANDLRRQCEVVDTAFVNGLKETKDARNKLADHLAKVMDEIASQEKNIEVLENAITQQEGPAKVAHTRLENRTYRPNVELCRDVAQYRLIREVQEIKHNVARLEETLAQAQIQLKALFRRQLALQEEIQVKENTIYIDQVLCMEMRKSIPPRDGDDHGAWEGGIRAEAIC</sequence>